<gene>
    <name type="primary">ANKDD1A</name>
</gene>
<feature type="chain" id="PRO_0000287882" description="Ankyrin repeat and death domain-containing protein 1A">
    <location>
        <begin position="1"/>
        <end position="522"/>
    </location>
</feature>
<feature type="repeat" description="ANK 1">
    <location>
        <begin position="14"/>
        <end position="43"/>
    </location>
</feature>
<feature type="repeat" description="ANK 2">
    <location>
        <begin position="47"/>
        <end position="76"/>
    </location>
</feature>
<feature type="repeat" description="ANK 3">
    <location>
        <begin position="90"/>
        <end position="119"/>
    </location>
</feature>
<feature type="repeat" description="ANK 4">
    <location>
        <begin position="123"/>
        <end position="152"/>
    </location>
</feature>
<feature type="repeat" description="ANK 5">
    <location>
        <begin position="158"/>
        <end position="187"/>
    </location>
</feature>
<feature type="repeat" description="ANK 6">
    <location>
        <begin position="191"/>
        <end position="220"/>
    </location>
</feature>
<feature type="repeat" description="ANK 7">
    <location>
        <begin position="224"/>
        <end position="253"/>
    </location>
</feature>
<feature type="repeat" description="ANK 8">
    <location>
        <begin position="257"/>
        <end position="286"/>
    </location>
</feature>
<feature type="repeat" description="ANK 9">
    <location>
        <begin position="290"/>
        <end position="319"/>
    </location>
</feature>
<feature type="repeat" description="ANK 10">
    <location>
        <begin position="323"/>
        <end position="352"/>
    </location>
</feature>
<feature type="repeat" description="ANK 11">
    <location>
        <begin position="356"/>
        <end position="385"/>
    </location>
</feature>
<feature type="domain" description="Death" evidence="1">
    <location>
        <begin position="413"/>
        <end position="501"/>
    </location>
</feature>
<feature type="splice variant" id="VSP_038676" description="In isoform 3." evidence="3">
    <original>LPLERQLHEAARQNNVGRMQELIGRRVNT</original>
    <variation>WDECASPVCLVRPLTNPLDLDKLRGQDPL</variation>
    <location>
        <begin position="13"/>
        <end position="41"/>
    </location>
</feature>
<feature type="splice variant" id="VSP_038677" description="In isoform 3." evidence="3">
    <location>
        <begin position="42"/>
        <end position="522"/>
    </location>
</feature>
<feature type="splice variant" id="VSP_038678" description="In isoform 2." evidence="4">
    <location>
        <begin position="355"/>
        <end position="386"/>
    </location>
</feature>
<feature type="splice variant" id="VSP_038675" description="In isoform 1." evidence="4">
    <original>GWSTMARSQLTATSASRVQMILVPQPPE</original>
    <variation>ENIRKKANAAPSAPRRCTAM</variation>
    <location>
        <begin position="495"/>
        <end position="522"/>
    </location>
</feature>
<feature type="sequence variant" id="VAR_032358" description="In dbSNP:rs34988193." evidence="2">
    <original>K</original>
    <variation>E</variation>
    <location>
        <position position="355"/>
    </location>
</feature>
<evidence type="ECO:0000255" key="1">
    <source>
        <dbReference type="PROSITE-ProRule" id="PRU00064"/>
    </source>
</evidence>
<evidence type="ECO:0000269" key="2">
    <source>
    </source>
</evidence>
<evidence type="ECO:0000303" key="3">
    <source>
    </source>
</evidence>
<evidence type="ECO:0000303" key="4">
    <source>
    </source>
</evidence>
<evidence type="ECO:0000305" key="5"/>
<accession>Q495B1</accession>
<accession>Q495B2</accession>
<accession>Q495B3</accession>
<accession>Q8N7A0</accession>
<accession>Q8NBS5</accession>
<protein>
    <recommendedName>
        <fullName>Ankyrin repeat and death domain-containing protein 1A</fullName>
    </recommendedName>
</protein>
<dbReference type="EMBL" id="AK075298">
    <property type="protein sequence ID" value="BAC11532.1"/>
    <property type="status" value="ALT_SEQ"/>
    <property type="molecule type" value="mRNA"/>
</dbReference>
<dbReference type="EMBL" id="AK098736">
    <property type="protein sequence ID" value="BAC05399.1"/>
    <property type="status" value="ALT_SEQ"/>
    <property type="molecule type" value="mRNA"/>
</dbReference>
<dbReference type="EMBL" id="AC069368">
    <property type="status" value="NOT_ANNOTATED_CDS"/>
    <property type="molecule type" value="Genomic_DNA"/>
</dbReference>
<dbReference type="EMBL" id="BC101273">
    <property type="protein sequence ID" value="AAI01274.1"/>
    <property type="molecule type" value="mRNA"/>
</dbReference>
<dbReference type="EMBL" id="BC101274">
    <property type="protein sequence ID" value="AAI01275.1"/>
    <property type="molecule type" value="mRNA"/>
</dbReference>
<dbReference type="EMBL" id="BC101275">
    <property type="protein sequence ID" value="AAI01276.1"/>
    <property type="molecule type" value="mRNA"/>
</dbReference>
<dbReference type="CCDS" id="CCDS10197.2">
    <molecule id="Q495B1-5"/>
</dbReference>
<dbReference type="RefSeq" id="NP_874362.3">
    <molecule id="Q495B1-5"/>
    <property type="nucleotide sequence ID" value="NM_182703.5"/>
</dbReference>
<dbReference type="SMR" id="Q495B1"/>
<dbReference type="BioGRID" id="131506">
    <property type="interactions" value="10"/>
</dbReference>
<dbReference type="FunCoup" id="Q495B1">
    <property type="interactions" value="82"/>
</dbReference>
<dbReference type="IntAct" id="Q495B1">
    <property type="interactions" value="5"/>
</dbReference>
<dbReference type="STRING" id="9606.ENSP00000325895"/>
<dbReference type="iPTMnet" id="Q495B1"/>
<dbReference type="PhosphoSitePlus" id="Q495B1"/>
<dbReference type="BioMuta" id="ANKDD1A"/>
<dbReference type="DMDM" id="288558803"/>
<dbReference type="jPOST" id="Q495B1"/>
<dbReference type="MassIVE" id="Q495B1"/>
<dbReference type="PaxDb" id="9606-ENSP00000325895"/>
<dbReference type="PeptideAtlas" id="Q495B1"/>
<dbReference type="ProteomicsDB" id="61950">
    <molecule id="Q495B1-5"/>
</dbReference>
<dbReference type="ProteomicsDB" id="61952">
    <molecule id="Q495B1-2"/>
</dbReference>
<dbReference type="Antibodypedia" id="34927">
    <property type="antibodies" value="97 antibodies from 13 providers"/>
</dbReference>
<dbReference type="DNASU" id="348094"/>
<dbReference type="Ensembl" id="ENST00000319580.13">
    <molecule id="Q495B1-5"/>
    <property type="protein sequence ID" value="ENSP00000325895.9"/>
    <property type="gene ID" value="ENSG00000166839.18"/>
</dbReference>
<dbReference type="GeneID" id="348094"/>
<dbReference type="KEGG" id="hsa:348094"/>
<dbReference type="MANE-Select" id="ENST00000319580.13">
    <property type="protein sequence ID" value="ENSP00000325895.9"/>
    <property type="RefSeq nucleotide sequence ID" value="NM_182703.6"/>
    <property type="RefSeq protein sequence ID" value="NP_874362.3"/>
</dbReference>
<dbReference type="UCSC" id="uc002anz.4">
    <molecule id="Q495B1-5"/>
    <property type="organism name" value="human"/>
</dbReference>
<dbReference type="AGR" id="HGNC:28002"/>
<dbReference type="CTD" id="348094"/>
<dbReference type="DisGeNET" id="348094"/>
<dbReference type="GeneCards" id="ANKDD1A"/>
<dbReference type="HGNC" id="HGNC:28002">
    <property type="gene designation" value="ANKDD1A"/>
</dbReference>
<dbReference type="HPA" id="ENSG00000166839">
    <property type="expression patterns" value="Tissue enhanced (adrenal)"/>
</dbReference>
<dbReference type="neXtProt" id="NX_Q495B1"/>
<dbReference type="OpenTargets" id="ENSG00000166839"/>
<dbReference type="PharmGKB" id="PA143485299"/>
<dbReference type="VEuPathDB" id="HostDB:ENSG00000166839"/>
<dbReference type="eggNOG" id="KOG4177">
    <property type="taxonomic scope" value="Eukaryota"/>
</dbReference>
<dbReference type="GeneTree" id="ENSGT00940000154170"/>
<dbReference type="InParanoid" id="Q495B1"/>
<dbReference type="OMA" id="RFYKWEQ"/>
<dbReference type="OrthoDB" id="448455at2759"/>
<dbReference type="PAN-GO" id="Q495B1">
    <property type="GO annotations" value="0 GO annotations based on evolutionary models"/>
</dbReference>
<dbReference type="PhylomeDB" id="Q495B1"/>
<dbReference type="TreeFam" id="TF333615"/>
<dbReference type="PathwayCommons" id="Q495B1"/>
<dbReference type="SignaLink" id="Q495B1"/>
<dbReference type="BioGRID-ORCS" id="348094">
    <property type="hits" value="14 hits in 1142 CRISPR screens"/>
</dbReference>
<dbReference type="ChiTaRS" id="ANKDD1A">
    <property type="organism name" value="human"/>
</dbReference>
<dbReference type="GenomeRNAi" id="348094"/>
<dbReference type="Pharos" id="Q495B1">
    <property type="development level" value="Tdark"/>
</dbReference>
<dbReference type="PRO" id="PR:Q495B1"/>
<dbReference type="Proteomes" id="UP000005640">
    <property type="component" value="Chromosome 15"/>
</dbReference>
<dbReference type="RNAct" id="Q495B1">
    <property type="molecule type" value="protein"/>
</dbReference>
<dbReference type="Bgee" id="ENSG00000166839">
    <property type="expression patterns" value="Expressed in tendon of biceps brachii and 165 other cell types or tissues"/>
</dbReference>
<dbReference type="ExpressionAtlas" id="Q495B1">
    <property type="expression patterns" value="baseline and differential"/>
</dbReference>
<dbReference type="GO" id="GO:0007165">
    <property type="term" value="P:signal transduction"/>
    <property type="evidence" value="ECO:0007669"/>
    <property type="project" value="InterPro"/>
</dbReference>
<dbReference type="CDD" id="cd01670">
    <property type="entry name" value="Death"/>
    <property type="match status" value="1"/>
</dbReference>
<dbReference type="Gene3D" id="1.25.40.20">
    <property type="entry name" value="Ankyrin repeat-containing domain"/>
    <property type="match status" value="4"/>
</dbReference>
<dbReference type="Gene3D" id="1.10.533.10">
    <property type="entry name" value="Death Domain, Fas"/>
    <property type="match status" value="1"/>
</dbReference>
<dbReference type="InterPro" id="IPR002110">
    <property type="entry name" value="Ankyrin_rpt"/>
</dbReference>
<dbReference type="InterPro" id="IPR036770">
    <property type="entry name" value="Ankyrin_rpt-contain_sf"/>
</dbReference>
<dbReference type="InterPro" id="IPR011029">
    <property type="entry name" value="DEATH-like_dom_sf"/>
</dbReference>
<dbReference type="InterPro" id="IPR000488">
    <property type="entry name" value="Death_dom"/>
</dbReference>
<dbReference type="PANTHER" id="PTHR24198">
    <property type="entry name" value="ANKYRIN REPEAT AND PROTEIN KINASE DOMAIN-CONTAINING PROTEIN"/>
    <property type="match status" value="1"/>
</dbReference>
<dbReference type="PANTHER" id="PTHR24198:SF195">
    <property type="entry name" value="DEATH DOMAIN-CONTAINING PROTEIN"/>
    <property type="match status" value="1"/>
</dbReference>
<dbReference type="Pfam" id="PF00023">
    <property type="entry name" value="Ank"/>
    <property type="match status" value="2"/>
</dbReference>
<dbReference type="Pfam" id="PF12796">
    <property type="entry name" value="Ank_2"/>
    <property type="match status" value="3"/>
</dbReference>
<dbReference type="PRINTS" id="PR01415">
    <property type="entry name" value="ANKYRIN"/>
</dbReference>
<dbReference type="SMART" id="SM00248">
    <property type="entry name" value="ANK"/>
    <property type="match status" value="10"/>
</dbReference>
<dbReference type="SUPFAM" id="SSF48403">
    <property type="entry name" value="Ankyrin repeat"/>
    <property type="match status" value="1"/>
</dbReference>
<dbReference type="SUPFAM" id="SSF47986">
    <property type="entry name" value="DEATH domain"/>
    <property type="match status" value="1"/>
</dbReference>
<dbReference type="PROSITE" id="PS50297">
    <property type="entry name" value="ANK_REP_REGION"/>
    <property type="match status" value="1"/>
</dbReference>
<dbReference type="PROSITE" id="PS50088">
    <property type="entry name" value="ANK_REPEAT"/>
    <property type="match status" value="8"/>
</dbReference>
<dbReference type="PROSITE" id="PS50017">
    <property type="entry name" value="DEATH_DOMAIN"/>
    <property type="match status" value="1"/>
</dbReference>
<organism>
    <name type="scientific">Homo sapiens</name>
    <name type="common">Human</name>
    <dbReference type="NCBI Taxonomy" id="9606"/>
    <lineage>
        <taxon>Eukaryota</taxon>
        <taxon>Metazoa</taxon>
        <taxon>Chordata</taxon>
        <taxon>Craniata</taxon>
        <taxon>Vertebrata</taxon>
        <taxon>Euteleostomi</taxon>
        <taxon>Mammalia</taxon>
        <taxon>Eutheria</taxon>
        <taxon>Euarchontoglires</taxon>
        <taxon>Primates</taxon>
        <taxon>Haplorrhini</taxon>
        <taxon>Catarrhini</taxon>
        <taxon>Hominidae</taxon>
        <taxon>Homo</taxon>
    </lineage>
</organism>
<proteinExistence type="evidence at protein level"/>
<comment type="interaction">
    <interactant intactId="EBI-11337191">
        <id>Q495B1</id>
    </interactant>
    <interactant intactId="EBI-745632">
        <id>Q9NWT6</id>
        <label>HIF1AN</label>
    </interactant>
    <organismsDiffer>false</organismsDiffer>
    <experiments>2</experiments>
</comment>
<comment type="alternative products">
    <event type="alternative splicing"/>
    <isoform>
        <id>Q495B1-5</id>
        <name>5</name>
        <sequence type="displayed"/>
    </isoform>
    <isoform>
        <id>Q495B1-2</id>
        <name>2</name>
        <sequence type="described" ref="VSP_038678"/>
    </isoform>
    <isoform>
        <id>Q495B1-6</id>
        <name>3</name>
        <sequence type="described" ref="VSP_038676 VSP_038677"/>
    </isoform>
    <isoform>
        <id>Q495B1-1</id>
        <name>1</name>
        <sequence type="described" ref="VSP_038675"/>
    </isoform>
</comment>
<comment type="miscellaneous">
    <molecule>Isoform 3</molecule>
    <text evidence="5">May be produced at very low levels due to a premature stop codon in the mRNA, leading to nonsense-mediated mRNA decay.</text>
</comment>
<comment type="miscellaneous">
    <molecule>Isoform 1</molecule>
    <text evidence="5">May be produced at very low levels due to a premature stop codon in the mRNA, leading to nonsense-mediated mRNA decay.</text>
</comment>
<comment type="sequence caution" evidence="5">
    <conflict type="miscellaneous discrepancy">
        <sequence resource="EMBL-CDS" id="BAC05399"/>
    </conflict>
    <text>Probable cloning artifact.</text>
</comment>
<comment type="sequence caution" evidence="5">
    <conflict type="erroneous translation">
        <sequence resource="EMBL-CDS" id="BAC11532"/>
    </conflict>
    <text>Wrong choice of frame.</text>
</comment>
<reference key="1">
    <citation type="journal article" date="2004" name="Nat. Genet.">
        <title>Complete sequencing and characterization of 21,243 full-length human cDNAs.</title>
        <authorList>
            <person name="Ota T."/>
            <person name="Suzuki Y."/>
            <person name="Nishikawa T."/>
            <person name="Otsuki T."/>
            <person name="Sugiyama T."/>
            <person name="Irie R."/>
            <person name="Wakamatsu A."/>
            <person name="Hayashi K."/>
            <person name="Sato H."/>
            <person name="Nagai K."/>
            <person name="Kimura K."/>
            <person name="Makita H."/>
            <person name="Sekine M."/>
            <person name="Obayashi M."/>
            <person name="Nishi T."/>
            <person name="Shibahara T."/>
            <person name="Tanaka T."/>
            <person name="Ishii S."/>
            <person name="Yamamoto J."/>
            <person name="Saito K."/>
            <person name="Kawai Y."/>
            <person name="Isono Y."/>
            <person name="Nakamura Y."/>
            <person name="Nagahari K."/>
            <person name="Murakami K."/>
            <person name="Yasuda T."/>
            <person name="Iwayanagi T."/>
            <person name="Wagatsuma M."/>
            <person name="Shiratori A."/>
            <person name="Sudo H."/>
            <person name="Hosoiri T."/>
            <person name="Kaku Y."/>
            <person name="Kodaira H."/>
            <person name="Kondo H."/>
            <person name="Sugawara M."/>
            <person name="Takahashi M."/>
            <person name="Kanda K."/>
            <person name="Yokoi T."/>
            <person name="Furuya T."/>
            <person name="Kikkawa E."/>
            <person name="Omura Y."/>
            <person name="Abe K."/>
            <person name="Kamihara K."/>
            <person name="Katsuta N."/>
            <person name="Sato K."/>
            <person name="Tanikawa M."/>
            <person name="Yamazaki M."/>
            <person name="Ninomiya K."/>
            <person name="Ishibashi T."/>
            <person name="Yamashita H."/>
            <person name="Murakawa K."/>
            <person name="Fujimori K."/>
            <person name="Tanai H."/>
            <person name="Kimata M."/>
            <person name="Watanabe M."/>
            <person name="Hiraoka S."/>
            <person name="Chiba Y."/>
            <person name="Ishida S."/>
            <person name="Ono Y."/>
            <person name="Takiguchi S."/>
            <person name="Watanabe S."/>
            <person name="Yosida M."/>
            <person name="Hotuta T."/>
            <person name="Kusano J."/>
            <person name="Kanehori K."/>
            <person name="Takahashi-Fujii A."/>
            <person name="Hara H."/>
            <person name="Tanase T.-O."/>
            <person name="Nomura Y."/>
            <person name="Togiya S."/>
            <person name="Komai F."/>
            <person name="Hara R."/>
            <person name="Takeuchi K."/>
            <person name="Arita M."/>
            <person name="Imose N."/>
            <person name="Musashino K."/>
            <person name="Yuuki H."/>
            <person name="Oshima A."/>
            <person name="Sasaki N."/>
            <person name="Aotsuka S."/>
            <person name="Yoshikawa Y."/>
            <person name="Matsunawa H."/>
            <person name="Ichihara T."/>
            <person name="Shiohata N."/>
            <person name="Sano S."/>
            <person name="Moriya S."/>
            <person name="Momiyama H."/>
            <person name="Satoh N."/>
            <person name="Takami S."/>
            <person name="Terashima Y."/>
            <person name="Suzuki O."/>
            <person name="Nakagawa S."/>
            <person name="Senoh A."/>
            <person name="Mizoguchi H."/>
            <person name="Goto Y."/>
            <person name="Shimizu F."/>
            <person name="Wakebe H."/>
            <person name="Hishigaki H."/>
            <person name="Watanabe T."/>
            <person name="Sugiyama A."/>
            <person name="Takemoto M."/>
            <person name="Kawakami B."/>
            <person name="Yamazaki M."/>
            <person name="Watanabe K."/>
            <person name="Kumagai A."/>
            <person name="Itakura S."/>
            <person name="Fukuzumi Y."/>
            <person name="Fujimori Y."/>
            <person name="Komiyama M."/>
            <person name="Tashiro H."/>
            <person name="Tanigami A."/>
            <person name="Fujiwara T."/>
            <person name="Ono T."/>
            <person name="Yamada K."/>
            <person name="Fujii Y."/>
            <person name="Ozaki K."/>
            <person name="Hirao M."/>
            <person name="Ohmori Y."/>
            <person name="Kawabata A."/>
            <person name="Hikiji T."/>
            <person name="Kobatake N."/>
            <person name="Inagaki H."/>
            <person name="Ikema Y."/>
            <person name="Okamoto S."/>
            <person name="Okitani R."/>
            <person name="Kawakami T."/>
            <person name="Noguchi S."/>
            <person name="Itoh T."/>
            <person name="Shigeta K."/>
            <person name="Senba T."/>
            <person name="Matsumura K."/>
            <person name="Nakajima Y."/>
            <person name="Mizuno T."/>
            <person name="Morinaga M."/>
            <person name="Sasaki M."/>
            <person name="Togashi T."/>
            <person name="Oyama M."/>
            <person name="Hata H."/>
            <person name="Watanabe M."/>
            <person name="Komatsu T."/>
            <person name="Mizushima-Sugano J."/>
            <person name="Satoh T."/>
            <person name="Shirai Y."/>
            <person name="Takahashi Y."/>
            <person name="Nakagawa K."/>
            <person name="Okumura K."/>
            <person name="Nagase T."/>
            <person name="Nomura N."/>
            <person name="Kikuchi H."/>
            <person name="Masuho Y."/>
            <person name="Yamashita R."/>
            <person name="Nakai K."/>
            <person name="Yada T."/>
            <person name="Nakamura Y."/>
            <person name="Ohara O."/>
            <person name="Isogai T."/>
            <person name="Sugano S."/>
        </authorList>
    </citation>
    <scope>NUCLEOTIDE SEQUENCE [LARGE SCALE MRNA] (ISOFORM 3)</scope>
    <source>
        <tissue>Brain</tissue>
    </source>
</reference>
<reference key="2">
    <citation type="journal article" date="2006" name="Nature">
        <title>Analysis of the DNA sequence and duplication history of human chromosome 15.</title>
        <authorList>
            <person name="Zody M.C."/>
            <person name="Garber M."/>
            <person name="Sharpe T."/>
            <person name="Young S.K."/>
            <person name="Rowen L."/>
            <person name="O'Neill K."/>
            <person name="Whittaker C.A."/>
            <person name="Kamal M."/>
            <person name="Chang J.L."/>
            <person name="Cuomo C.A."/>
            <person name="Dewar K."/>
            <person name="FitzGerald M.G."/>
            <person name="Kodira C.D."/>
            <person name="Madan A."/>
            <person name="Qin S."/>
            <person name="Yang X."/>
            <person name="Abbasi N."/>
            <person name="Abouelleil A."/>
            <person name="Arachchi H.M."/>
            <person name="Baradarani L."/>
            <person name="Birditt B."/>
            <person name="Bloom S."/>
            <person name="Bloom T."/>
            <person name="Borowsky M.L."/>
            <person name="Burke J."/>
            <person name="Butler J."/>
            <person name="Cook A."/>
            <person name="DeArellano K."/>
            <person name="DeCaprio D."/>
            <person name="Dorris L. III"/>
            <person name="Dors M."/>
            <person name="Eichler E.E."/>
            <person name="Engels R."/>
            <person name="Fahey J."/>
            <person name="Fleetwood P."/>
            <person name="Friedman C."/>
            <person name="Gearin G."/>
            <person name="Hall J.L."/>
            <person name="Hensley G."/>
            <person name="Johnson E."/>
            <person name="Jones C."/>
            <person name="Kamat A."/>
            <person name="Kaur A."/>
            <person name="Locke D.P."/>
            <person name="Madan A."/>
            <person name="Munson G."/>
            <person name="Jaffe D.B."/>
            <person name="Lui A."/>
            <person name="Macdonald P."/>
            <person name="Mauceli E."/>
            <person name="Naylor J.W."/>
            <person name="Nesbitt R."/>
            <person name="Nicol R."/>
            <person name="O'Leary S.B."/>
            <person name="Ratcliffe A."/>
            <person name="Rounsley S."/>
            <person name="She X."/>
            <person name="Sneddon K.M.B."/>
            <person name="Stewart S."/>
            <person name="Sougnez C."/>
            <person name="Stone S.M."/>
            <person name="Topham K."/>
            <person name="Vincent D."/>
            <person name="Wang S."/>
            <person name="Zimmer A.R."/>
            <person name="Birren B.W."/>
            <person name="Hood L."/>
            <person name="Lander E.S."/>
            <person name="Nusbaum C."/>
        </authorList>
    </citation>
    <scope>NUCLEOTIDE SEQUENCE [LARGE SCALE GENOMIC DNA]</scope>
</reference>
<reference key="3">
    <citation type="journal article" date="2004" name="Genome Res.">
        <title>The status, quality, and expansion of the NIH full-length cDNA project: the Mammalian Gene Collection (MGC).</title>
        <authorList>
            <consortium name="The MGC Project Team"/>
        </authorList>
    </citation>
    <scope>NUCLEOTIDE SEQUENCE [LARGE SCALE MRNA] OF 92-522 (ISOFORMS 1 AND 2)</scope>
    <scope>VARIANT GLU-355</scope>
</reference>
<name>AKD1A_HUMAN</name>
<sequence length="522" mass="57550">MQEELAWETDGLLPLERQLHEAARQNNVGRMQELIGRRVNTRARNHVGRVALHWAAGAGHEQAVRLLLEHEAAVDEEDAVGALTEARLCFGMNALLLSAWFGHLRILQILVNSGAKIHCESKDGLTLLHCAAQKGHVPVLAFIMEDLEDVALDHVDKLGRTAFHRAAEHGQLDALDFLVGSGCDHNVKDKEGNTALHLAAGRGHMAVLQRLVDIGLDLEEQNAEGLTALHSAAGGSHPDCVQLLLRAGSTVNALTQKNLSCLHYAALSGSEDVSRVLIHAGGCANVVDHQGASPLHLAVRHNFPALVRLLINSDSDVNAVDNRQQTPLHLAAEHAWQDIADMLLIAGVDLNLRDKQGKTALAVAVRSNHVSLVDMIIKADRFYRWEKDHPSDPSGKSLSFKQDHRQETQQLRSVLWRLASRYLQPREWKKLAYSWEFTEAHVDAIEQQWTGTRSYQEHGHRMLLIWLHGVATAGENPSKALFEGLVAIGRRDLAGWSTMARSQLTATSASRVQMILVPQPPE</sequence>
<keyword id="KW-0025">Alternative splicing</keyword>
<keyword id="KW-0040">ANK repeat</keyword>
<keyword id="KW-1267">Proteomics identification</keyword>
<keyword id="KW-1185">Reference proteome</keyword>
<keyword id="KW-0677">Repeat</keyword>